<feature type="chain" id="PRO_0000284983" description="Probable tRNA(His) guanylyltransferase">
    <location>
        <begin position="1"/>
        <end position="298"/>
    </location>
</feature>
<feature type="binding site" evidence="1">
    <location>
        <begin position="58"/>
        <end position="63"/>
    </location>
    <ligand>
        <name>GTP</name>
        <dbReference type="ChEBI" id="CHEBI:37565"/>
    </ligand>
</feature>
<feature type="binding site" evidence="1">
    <location>
        <position position="58"/>
    </location>
    <ligand>
        <name>Mg(2+)</name>
        <dbReference type="ChEBI" id="CHEBI:18420"/>
        <label>1</label>
        <note>catalytic</note>
    </ligand>
</feature>
<feature type="binding site" evidence="1">
    <location>
        <position position="58"/>
    </location>
    <ligand>
        <name>Mg(2+)</name>
        <dbReference type="ChEBI" id="CHEBI:18420"/>
        <label>2</label>
        <note>catalytic</note>
    </ligand>
</feature>
<feature type="binding site" evidence="1">
    <location>
        <position position="59"/>
    </location>
    <ligand>
        <name>Mg(2+)</name>
        <dbReference type="ChEBI" id="CHEBI:18420"/>
        <label>1</label>
        <note>catalytic</note>
    </ligand>
</feature>
<feature type="binding site" evidence="1">
    <location>
        <begin position="104"/>
        <end position="105"/>
    </location>
    <ligand>
        <name>GTP</name>
        <dbReference type="ChEBI" id="CHEBI:37565"/>
    </ligand>
</feature>
<feature type="binding site" evidence="1">
    <location>
        <position position="105"/>
    </location>
    <ligand>
        <name>Mg(2+)</name>
        <dbReference type="ChEBI" id="CHEBI:18420"/>
        <label>1</label>
        <note>catalytic</note>
    </ligand>
</feature>
<feature type="binding site" evidence="1">
    <location>
        <position position="105"/>
    </location>
    <ligand>
        <name>Mg(2+)</name>
        <dbReference type="ChEBI" id="CHEBI:18420"/>
        <label>2</label>
        <note>catalytic</note>
    </ligand>
</feature>
<evidence type="ECO:0000250" key="1"/>
<evidence type="ECO:0000250" key="2">
    <source>
        <dbReference type="UniProtKB" id="Q9NWX6"/>
    </source>
</evidence>
<evidence type="ECO:0000305" key="3"/>
<comment type="function">
    <text evidence="2">Adds a GMP to the 5'-end of tRNA(His) after transcription and RNase P cleavage. This step is essential for proper recognition of the tRNA and for the fidelity of protein synthesis. Also functions as a guanyl-nucleotide exchange factor/GEF for the MFN1 and MFN2 mitofusins thereby regulating mitochondrial fusion. By regulating both mitochondrial dynamics and bioenergetic function, it contributes to cell survival following oxidative stress.</text>
</comment>
<comment type="catalytic activity">
    <reaction evidence="2">
        <text>a 5'-end ribonucleotide-tRNA(His) + GTP + ATP + H2O = a 5'-end phospho-guanosine-ribonucleotide-tRNA(His) + AMP + 2 diphosphate + H(+)</text>
        <dbReference type="Rhea" id="RHEA:54564"/>
        <dbReference type="Rhea" id="RHEA-COMP:14193"/>
        <dbReference type="Rhea" id="RHEA-COMP:14917"/>
        <dbReference type="ChEBI" id="CHEBI:15377"/>
        <dbReference type="ChEBI" id="CHEBI:15378"/>
        <dbReference type="ChEBI" id="CHEBI:30616"/>
        <dbReference type="ChEBI" id="CHEBI:33019"/>
        <dbReference type="ChEBI" id="CHEBI:37565"/>
        <dbReference type="ChEBI" id="CHEBI:138282"/>
        <dbReference type="ChEBI" id="CHEBI:141847"/>
        <dbReference type="ChEBI" id="CHEBI:456215"/>
        <dbReference type="EC" id="2.7.7.79"/>
    </reaction>
</comment>
<comment type="cofactor">
    <cofactor evidence="1">
        <name>Mg(2+)</name>
        <dbReference type="ChEBI" id="CHEBI:18420"/>
    </cofactor>
    <text evidence="1">Binds 2 magnesium ions per subunit.</text>
</comment>
<comment type="subunit">
    <text evidence="2">Homotetramer. Interacts with MFN1 and MFN2; functions as a guanyl-nucleotide exchange factor/GEF for MFN2 and also probably MFN1.</text>
</comment>
<comment type="subcellular location">
    <subcellularLocation>
        <location>Cytoplasm</location>
    </subcellularLocation>
    <subcellularLocation>
        <location evidence="2">Mitochondrion</location>
    </subcellularLocation>
</comment>
<comment type="similarity">
    <text evidence="3">Belongs to the tRNA(His) guanylyltransferase family.</text>
</comment>
<accession>Q05B50</accession>
<keyword id="KW-0963">Cytoplasm</keyword>
<keyword id="KW-0342">GTP-binding</keyword>
<keyword id="KW-0460">Magnesium</keyword>
<keyword id="KW-0479">Metal-binding</keyword>
<keyword id="KW-0496">Mitochondrion</keyword>
<keyword id="KW-0547">Nucleotide-binding</keyword>
<keyword id="KW-0548">Nucleotidyltransferase</keyword>
<keyword id="KW-1185">Reference proteome</keyword>
<keyword id="KW-0808">Transferase</keyword>
<keyword id="KW-0819">tRNA processing</keyword>
<proteinExistence type="evidence at transcript level"/>
<dbReference type="EC" id="2.7.7.79" evidence="2"/>
<dbReference type="EMBL" id="BC122826">
    <property type="protein sequence ID" value="AAI22827.1"/>
    <property type="molecule type" value="mRNA"/>
</dbReference>
<dbReference type="RefSeq" id="NP_001073702.1">
    <property type="nucleotide sequence ID" value="NM_001080233.2"/>
</dbReference>
<dbReference type="SMR" id="Q05B50"/>
<dbReference type="FunCoup" id="Q05B50">
    <property type="interactions" value="4580"/>
</dbReference>
<dbReference type="STRING" id="9913.ENSBTAP00000013678"/>
<dbReference type="PaxDb" id="9913-ENSBTAP00000013678"/>
<dbReference type="GeneID" id="507084"/>
<dbReference type="KEGG" id="bta:507084"/>
<dbReference type="CTD" id="54974"/>
<dbReference type="VEuPathDB" id="HostDB:ENSBTAG00000010359"/>
<dbReference type="eggNOG" id="KOG2721">
    <property type="taxonomic scope" value="Eukaryota"/>
</dbReference>
<dbReference type="HOGENOM" id="CLU_044271_0_0_1"/>
<dbReference type="InParanoid" id="Q05B50"/>
<dbReference type="OMA" id="WKQHTEI"/>
<dbReference type="OrthoDB" id="62560at2759"/>
<dbReference type="TreeFam" id="TF325119"/>
<dbReference type="Proteomes" id="UP000009136">
    <property type="component" value="Chromosome 7"/>
</dbReference>
<dbReference type="Bgee" id="ENSBTAG00000010359">
    <property type="expression patterns" value="Expressed in oviduct epithelium and 106 other cell types or tissues"/>
</dbReference>
<dbReference type="GO" id="GO:0005739">
    <property type="term" value="C:mitochondrion"/>
    <property type="evidence" value="ECO:0007669"/>
    <property type="project" value="UniProtKB-SubCell"/>
</dbReference>
<dbReference type="GO" id="GO:0005525">
    <property type="term" value="F:GTP binding"/>
    <property type="evidence" value="ECO:0007669"/>
    <property type="project" value="UniProtKB-KW"/>
</dbReference>
<dbReference type="GO" id="GO:0000287">
    <property type="term" value="F:magnesium ion binding"/>
    <property type="evidence" value="ECO:0007669"/>
    <property type="project" value="InterPro"/>
</dbReference>
<dbReference type="GO" id="GO:0008193">
    <property type="term" value="F:tRNA guanylyltransferase activity"/>
    <property type="evidence" value="ECO:0000250"/>
    <property type="project" value="UniProtKB"/>
</dbReference>
<dbReference type="GO" id="GO:0006979">
    <property type="term" value="P:response to oxidative stress"/>
    <property type="evidence" value="ECO:0000250"/>
    <property type="project" value="UniProtKB"/>
</dbReference>
<dbReference type="GO" id="GO:1990046">
    <property type="term" value="P:stress-induced mitochondrial fusion"/>
    <property type="evidence" value="ECO:0000250"/>
    <property type="project" value="UniProtKB"/>
</dbReference>
<dbReference type="GO" id="GO:0006400">
    <property type="term" value="P:tRNA modification"/>
    <property type="evidence" value="ECO:0000250"/>
    <property type="project" value="UniProtKB"/>
</dbReference>
<dbReference type="GO" id="GO:0008033">
    <property type="term" value="P:tRNA processing"/>
    <property type="evidence" value="ECO:0000250"/>
    <property type="project" value="UniProtKB"/>
</dbReference>
<dbReference type="FunFam" id="3.30.70.3000:FF:000001">
    <property type="entry name" value="tRNA(His) guanylyltransferase"/>
    <property type="match status" value="1"/>
</dbReference>
<dbReference type="Gene3D" id="3.30.70.3000">
    <property type="match status" value="1"/>
</dbReference>
<dbReference type="InterPro" id="IPR025845">
    <property type="entry name" value="Thg1_C_dom"/>
</dbReference>
<dbReference type="InterPro" id="IPR024956">
    <property type="entry name" value="tRNAHis_GuaTrfase_cat"/>
</dbReference>
<dbReference type="InterPro" id="IPR007537">
    <property type="entry name" value="tRNAHis_GuaTrfase_Thg1"/>
</dbReference>
<dbReference type="InterPro" id="IPR038469">
    <property type="entry name" value="tRNAHis_GuaTrfase_Thg1_sf"/>
</dbReference>
<dbReference type="PANTHER" id="PTHR12729">
    <property type="entry name" value="TRNA(HIS) GUANYLYLTRANSFERASE-RELATED"/>
    <property type="match status" value="1"/>
</dbReference>
<dbReference type="PANTHER" id="PTHR12729:SF6">
    <property type="entry name" value="TRNA(HIS) GUANYLYLTRANSFERASE-RELATED"/>
    <property type="match status" value="1"/>
</dbReference>
<dbReference type="Pfam" id="PF04446">
    <property type="entry name" value="Thg1"/>
    <property type="match status" value="1"/>
</dbReference>
<dbReference type="Pfam" id="PF14413">
    <property type="entry name" value="Thg1C"/>
    <property type="match status" value="1"/>
</dbReference>
<dbReference type="PIRSF" id="PIRSF028980">
    <property type="entry name" value="tRNAHis_guanylyltransferase"/>
    <property type="match status" value="1"/>
</dbReference>
<gene>
    <name type="primary">THG1L</name>
</gene>
<organism>
    <name type="scientific">Bos taurus</name>
    <name type="common">Bovine</name>
    <dbReference type="NCBI Taxonomy" id="9913"/>
    <lineage>
        <taxon>Eukaryota</taxon>
        <taxon>Metazoa</taxon>
        <taxon>Chordata</taxon>
        <taxon>Craniata</taxon>
        <taxon>Vertebrata</taxon>
        <taxon>Euteleostomi</taxon>
        <taxon>Mammalia</taxon>
        <taxon>Eutheria</taxon>
        <taxon>Laurasiatheria</taxon>
        <taxon>Artiodactyla</taxon>
        <taxon>Ruminantia</taxon>
        <taxon>Pecora</taxon>
        <taxon>Bovidae</taxon>
        <taxon>Bovinae</taxon>
        <taxon>Bos</taxon>
    </lineage>
</organism>
<name>THG1_BOVIN</name>
<protein>
    <recommendedName>
        <fullName>Probable tRNA(His) guanylyltransferase</fullName>
        <ecNumber evidence="2">2.7.7.79</ecNumber>
    </recommendedName>
    <alternativeName>
        <fullName>tRNA-histidine guanylyltransferase</fullName>
    </alternativeName>
</protein>
<reference key="1">
    <citation type="submission" date="2006-08" db="EMBL/GenBank/DDBJ databases">
        <authorList>
            <consortium name="NIH - Mammalian Gene Collection (MGC) project"/>
        </authorList>
    </citation>
    <scope>NUCLEOTIDE SEQUENCE [LARGE SCALE MRNA]</scope>
    <source>
        <strain>Hereford</strain>
        <tissue>Hypothalamus</tissue>
    </source>
</reference>
<sequence length="298" mass="34740">MWAAGALKVRDCLAATSVTLRRCLKLGATMAKSKFEYVRDFEADDTCLPHCWVVVRLDGRNFHRFAEKHSFIKPNDSRALHLMTKCAQTVMNELEDIVIAYGQSDEYSFVFKRKSNWFKRRASKFMTHVVSQFASSYVFYWRDYFEDQPLLYPPGFDGRVIVYPSNQTLKDYLSWRQADCHINNLYNTVFWALVQQSGLTPLQAQERLQGTLAADKNEILFSEFNINYNNEPLMYRKGTVLIWQKVEEITTKEVKLPAEMEGKKMAVTRTRTMVVPLHCNIIGDAFWKEHPEILDEDS</sequence>